<comment type="function">
    <text evidence="1">Responsible for synthesis of pseudouridine from uracil-55 in the psi GC loop of transfer RNAs.</text>
</comment>
<comment type="catalytic activity">
    <reaction evidence="1">
        <text>uridine(55) in tRNA = pseudouridine(55) in tRNA</text>
        <dbReference type="Rhea" id="RHEA:42532"/>
        <dbReference type="Rhea" id="RHEA-COMP:10101"/>
        <dbReference type="Rhea" id="RHEA-COMP:10102"/>
        <dbReference type="ChEBI" id="CHEBI:65314"/>
        <dbReference type="ChEBI" id="CHEBI:65315"/>
        <dbReference type="EC" id="5.4.99.25"/>
    </reaction>
</comment>
<comment type="similarity">
    <text evidence="1">Belongs to the pseudouridine synthase TruB family. Type 1 subfamily.</text>
</comment>
<name>TRUB_LEGPC</name>
<protein>
    <recommendedName>
        <fullName evidence="1">tRNA pseudouridine synthase B</fullName>
        <ecNumber evidence="1">5.4.99.25</ecNumber>
    </recommendedName>
    <alternativeName>
        <fullName evidence="1">tRNA pseudouridine(55) synthase</fullName>
        <shortName evidence="1">Psi55 synthase</shortName>
    </alternativeName>
    <alternativeName>
        <fullName evidence="1">tRNA pseudouridylate synthase</fullName>
    </alternativeName>
    <alternativeName>
        <fullName evidence="1">tRNA-uridine isomerase</fullName>
    </alternativeName>
</protein>
<evidence type="ECO:0000255" key="1">
    <source>
        <dbReference type="HAMAP-Rule" id="MF_01080"/>
    </source>
</evidence>
<sequence>MTTIESQCSIDGILLLNKPQGMTSNAALQKAKHLFGAKKAGHTGSLDPLATGMLPLCFGEATKICQYLLNADKSYETIGRLGSKTNTADCTGEVIFCIENYTVSHEEMIATLEKYKGKIKQIPSMFSALKHKGTPLYRLAREGIEIERKARDIVISQLKLEQFDGECFTLTVSCSKGTYIRNLVEDIGDTLKAGAHMTKLHRLYTAGFENNRMYTLDELQDMPLSQRLACLIPIDQAIQHLTPVILSDSEVTAIRQGKVISNKTGAVEGEDLRLYGEQSQFIGIGQALIHGDIKAKRLVSFAL</sequence>
<feature type="chain" id="PRO_1000084618" description="tRNA pseudouridine synthase B">
    <location>
        <begin position="1"/>
        <end position="303"/>
    </location>
</feature>
<feature type="active site" description="Nucleophile" evidence="1">
    <location>
        <position position="47"/>
    </location>
</feature>
<dbReference type="EC" id="5.4.99.25" evidence="1"/>
<dbReference type="EMBL" id="CP000675">
    <property type="protein sequence ID" value="ABQ56945.1"/>
    <property type="molecule type" value="Genomic_DNA"/>
</dbReference>
<dbReference type="RefSeq" id="WP_011947662.1">
    <property type="nucleotide sequence ID" value="NZ_JAPMSS010000004.1"/>
</dbReference>
<dbReference type="SMR" id="A5IHU5"/>
<dbReference type="KEGG" id="lpc:LPC_3055"/>
<dbReference type="HOGENOM" id="CLU_032087_0_3_6"/>
<dbReference type="GO" id="GO:0003723">
    <property type="term" value="F:RNA binding"/>
    <property type="evidence" value="ECO:0007669"/>
    <property type="project" value="InterPro"/>
</dbReference>
<dbReference type="GO" id="GO:0160148">
    <property type="term" value="F:tRNA pseudouridine(55) synthase activity"/>
    <property type="evidence" value="ECO:0007669"/>
    <property type="project" value="UniProtKB-EC"/>
</dbReference>
<dbReference type="GO" id="GO:1990481">
    <property type="term" value="P:mRNA pseudouridine synthesis"/>
    <property type="evidence" value="ECO:0007669"/>
    <property type="project" value="TreeGrafter"/>
</dbReference>
<dbReference type="GO" id="GO:0031119">
    <property type="term" value="P:tRNA pseudouridine synthesis"/>
    <property type="evidence" value="ECO:0007669"/>
    <property type="project" value="UniProtKB-UniRule"/>
</dbReference>
<dbReference type="CDD" id="cd02573">
    <property type="entry name" value="PseudoU_synth_EcTruB"/>
    <property type="match status" value="1"/>
</dbReference>
<dbReference type="CDD" id="cd21152">
    <property type="entry name" value="PUA_TruB_bacterial"/>
    <property type="match status" value="1"/>
</dbReference>
<dbReference type="Gene3D" id="3.30.2350.10">
    <property type="entry name" value="Pseudouridine synthase"/>
    <property type="match status" value="1"/>
</dbReference>
<dbReference type="Gene3D" id="2.30.130.10">
    <property type="entry name" value="PUA domain"/>
    <property type="match status" value="1"/>
</dbReference>
<dbReference type="HAMAP" id="MF_01080">
    <property type="entry name" value="TruB_bact"/>
    <property type="match status" value="1"/>
</dbReference>
<dbReference type="InterPro" id="IPR020103">
    <property type="entry name" value="PsdUridine_synth_cat_dom_sf"/>
</dbReference>
<dbReference type="InterPro" id="IPR002501">
    <property type="entry name" value="PsdUridine_synth_N"/>
</dbReference>
<dbReference type="InterPro" id="IPR015947">
    <property type="entry name" value="PUA-like_sf"/>
</dbReference>
<dbReference type="InterPro" id="IPR036974">
    <property type="entry name" value="PUA_sf"/>
</dbReference>
<dbReference type="InterPro" id="IPR014780">
    <property type="entry name" value="tRNA_psdUridine_synth_TruB"/>
</dbReference>
<dbReference type="InterPro" id="IPR015240">
    <property type="entry name" value="tRNA_sdUridine_synth_fam1_C"/>
</dbReference>
<dbReference type="InterPro" id="IPR032819">
    <property type="entry name" value="TruB_C"/>
</dbReference>
<dbReference type="NCBIfam" id="TIGR00431">
    <property type="entry name" value="TruB"/>
    <property type="match status" value="1"/>
</dbReference>
<dbReference type="PANTHER" id="PTHR13767:SF2">
    <property type="entry name" value="PSEUDOURIDYLATE SYNTHASE TRUB1"/>
    <property type="match status" value="1"/>
</dbReference>
<dbReference type="PANTHER" id="PTHR13767">
    <property type="entry name" value="TRNA-PSEUDOURIDINE SYNTHASE"/>
    <property type="match status" value="1"/>
</dbReference>
<dbReference type="Pfam" id="PF09157">
    <property type="entry name" value="TruB-C_2"/>
    <property type="match status" value="1"/>
</dbReference>
<dbReference type="Pfam" id="PF16198">
    <property type="entry name" value="TruB_C_2"/>
    <property type="match status" value="1"/>
</dbReference>
<dbReference type="Pfam" id="PF01509">
    <property type="entry name" value="TruB_N"/>
    <property type="match status" value="1"/>
</dbReference>
<dbReference type="SUPFAM" id="SSF55120">
    <property type="entry name" value="Pseudouridine synthase"/>
    <property type="match status" value="1"/>
</dbReference>
<dbReference type="SUPFAM" id="SSF88697">
    <property type="entry name" value="PUA domain-like"/>
    <property type="match status" value="1"/>
</dbReference>
<gene>
    <name evidence="1" type="primary">truB</name>
    <name type="ordered locus">LPC_3055</name>
</gene>
<keyword id="KW-0413">Isomerase</keyword>
<keyword id="KW-0819">tRNA processing</keyword>
<organism>
    <name type="scientific">Legionella pneumophila (strain Corby)</name>
    <dbReference type="NCBI Taxonomy" id="400673"/>
    <lineage>
        <taxon>Bacteria</taxon>
        <taxon>Pseudomonadati</taxon>
        <taxon>Pseudomonadota</taxon>
        <taxon>Gammaproteobacteria</taxon>
        <taxon>Legionellales</taxon>
        <taxon>Legionellaceae</taxon>
        <taxon>Legionella</taxon>
    </lineage>
</organism>
<proteinExistence type="inferred from homology"/>
<reference key="1">
    <citation type="submission" date="2006-11" db="EMBL/GenBank/DDBJ databases">
        <title>Identification and characterization of a new conjugation/ type IVA secretion system (trb/tra) of L. pneumophila Corby localized on a mobile genomic island.</title>
        <authorList>
            <person name="Gloeckner G."/>
            <person name="Albert-Weissenberger C."/>
            <person name="Weinmann E."/>
            <person name="Jacobi S."/>
            <person name="Schunder E."/>
            <person name="Steinert M."/>
            <person name="Buchrieser C."/>
            <person name="Hacker J."/>
            <person name="Heuner K."/>
        </authorList>
    </citation>
    <scope>NUCLEOTIDE SEQUENCE [LARGE SCALE GENOMIC DNA]</scope>
    <source>
        <strain>Corby</strain>
    </source>
</reference>
<accession>A5IHU5</accession>